<accession>O05395</accession>
<proteinExistence type="predicted"/>
<keyword id="KW-1003">Cell membrane</keyword>
<keyword id="KW-0472">Membrane</keyword>
<keyword id="KW-1185">Reference proteome</keyword>
<keyword id="KW-0812">Transmembrane</keyword>
<keyword id="KW-1133">Transmembrane helix</keyword>
<evidence type="ECO:0000255" key="1"/>
<evidence type="ECO:0000305" key="2"/>
<feature type="chain" id="PRO_0000049864" description="Uncharacterized protein YrhC">
    <location>
        <begin position="1"/>
        <end position="76"/>
    </location>
</feature>
<feature type="transmembrane region" description="Helical" evidence="1">
    <location>
        <begin position="16"/>
        <end position="33"/>
    </location>
</feature>
<feature type="transmembrane region" description="Helical" evidence="1">
    <location>
        <begin position="45"/>
        <end position="61"/>
    </location>
</feature>
<dbReference type="EMBL" id="U93874">
    <property type="protein sequence ID" value="AAB80860.1"/>
    <property type="molecule type" value="Genomic_DNA"/>
</dbReference>
<dbReference type="EMBL" id="AL009126">
    <property type="protein sequence ID" value="CAB14666.1"/>
    <property type="molecule type" value="Genomic_DNA"/>
</dbReference>
<dbReference type="PIR" id="B69974">
    <property type="entry name" value="B69974"/>
</dbReference>
<dbReference type="RefSeq" id="NP_390602.1">
    <property type="nucleotide sequence ID" value="NC_000964.3"/>
</dbReference>
<dbReference type="RefSeq" id="WP_003237358.1">
    <property type="nucleotide sequence ID" value="NZ_OZ025638.1"/>
</dbReference>
<dbReference type="SMR" id="O05395"/>
<dbReference type="FunCoup" id="O05395">
    <property type="interactions" value="127"/>
</dbReference>
<dbReference type="STRING" id="224308.BSU27240"/>
<dbReference type="PaxDb" id="224308-BSU27240"/>
<dbReference type="EnsemblBacteria" id="CAB14666">
    <property type="protein sequence ID" value="CAB14666"/>
    <property type="gene ID" value="BSU_27240"/>
</dbReference>
<dbReference type="GeneID" id="936495"/>
<dbReference type="KEGG" id="bsu:BSU27240"/>
<dbReference type="PATRIC" id="fig|224308.179.peg.2960"/>
<dbReference type="eggNOG" id="ENOG50332YN">
    <property type="taxonomic scope" value="Bacteria"/>
</dbReference>
<dbReference type="InParanoid" id="O05395"/>
<dbReference type="OrthoDB" id="2943632at2"/>
<dbReference type="BioCyc" id="BSUB:BSU27240-MONOMER"/>
<dbReference type="Proteomes" id="UP000001570">
    <property type="component" value="Chromosome"/>
</dbReference>
<dbReference type="GO" id="GO:0005886">
    <property type="term" value="C:plasma membrane"/>
    <property type="evidence" value="ECO:0007669"/>
    <property type="project" value="UniProtKB-SubCell"/>
</dbReference>
<dbReference type="InterPro" id="IPR025418">
    <property type="entry name" value="YrhC-like"/>
</dbReference>
<dbReference type="Pfam" id="PF14143">
    <property type="entry name" value="YrhC"/>
    <property type="match status" value="1"/>
</dbReference>
<reference key="1">
    <citation type="journal article" date="1997" name="Microbiology">
        <title>Sequence of the Bacillus subtilis genome region in the vicinity of the lev operon reveals two new extracytoplasmic function RNA polymerase sigma factors SigV and SigZ.</title>
        <authorList>
            <person name="Sorokin A."/>
            <person name="Bolotin A."/>
            <person name="Purnelle B."/>
            <person name="Hilbert H."/>
            <person name="Lauber J."/>
            <person name="Duesterhoeft A."/>
            <person name="Ehrlich S.D."/>
        </authorList>
    </citation>
    <scope>NUCLEOTIDE SEQUENCE [GENOMIC DNA]</scope>
    <source>
        <strain>168</strain>
    </source>
</reference>
<reference key="2">
    <citation type="journal article" date="1997" name="Nature">
        <title>The complete genome sequence of the Gram-positive bacterium Bacillus subtilis.</title>
        <authorList>
            <person name="Kunst F."/>
            <person name="Ogasawara N."/>
            <person name="Moszer I."/>
            <person name="Albertini A.M."/>
            <person name="Alloni G."/>
            <person name="Azevedo V."/>
            <person name="Bertero M.G."/>
            <person name="Bessieres P."/>
            <person name="Bolotin A."/>
            <person name="Borchert S."/>
            <person name="Borriss R."/>
            <person name="Boursier L."/>
            <person name="Brans A."/>
            <person name="Braun M."/>
            <person name="Brignell S.C."/>
            <person name="Bron S."/>
            <person name="Brouillet S."/>
            <person name="Bruschi C.V."/>
            <person name="Caldwell B."/>
            <person name="Capuano V."/>
            <person name="Carter N.M."/>
            <person name="Choi S.-K."/>
            <person name="Codani J.-J."/>
            <person name="Connerton I.F."/>
            <person name="Cummings N.J."/>
            <person name="Daniel R.A."/>
            <person name="Denizot F."/>
            <person name="Devine K.M."/>
            <person name="Duesterhoeft A."/>
            <person name="Ehrlich S.D."/>
            <person name="Emmerson P.T."/>
            <person name="Entian K.-D."/>
            <person name="Errington J."/>
            <person name="Fabret C."/>
            <person name="Ferrari E."/>
            <person name="Foulger D."/>
            <person name="Fritz C."/>
            <person name="Fujita M."/>
            <person name="Fujita Y."/>
            <person name="Fuma S."/>
            <person name="Galizzi A."/>
            <person name="Galleron N."/>
            <person name="Ghim S.-Y."/>
            <person name="Glaser P."/>
            <person name="Goffeau A."/>
            <person name="Golightly E.J."/>
            <person name="Grandi G."/>
            <person name="Guiseppi G."/>
            <person name="Guy B.J."/>
            <person name="Haga K."/>
            <person name="Haiech J."/>
            <person name="Harwood C.R."/>
            <person name="Henaut A."/>
            <person name="Hilbert H."/>
            <person name="Holsappel S."/>
            <person name="Hosono S."/>
            <person name="Hullo M.-F."/>
            <person name="Itaya M."/>
            <person name="Jones L.-M."/>
            <person name="Joris B."/>
            <person name="Karamata D."/>
            <person name="Kasahara Y."/>
            <person name="Klaerr-Blanchard M."/>
            <person name="Klein C."/>
            <person name="Kobayashi Y."/>
            <person name="Koetter P."/>
            <person name="Koningstein G."/>
            <person name="Krogh S."/>
            <person name="Kumano M."/>
            <person name="Kurita K."/>
            <person name="Lapidus A."/>
            <person name="Lardinois S."/>
            <person name="Lauber J."/>
            <person name="Lazarevic V."/>
            <person name="Lee S.-M."/>
            <person name="Levine A."/>
            <person name="Liu H."/>
            <person name="Masuda S."/>
            <person name="Mauel C."/>
            <person name="Medigue C."/>
            <person name="Medina N."/>
            <person name="Mellado R.P."/>
            <person name="Mizuno M."/>
            <person name="Moestl D."/>
            <person name="Nakai S."/>
            <person name="Noback M."/>
            <person name="Noone D."/>
            <person name="O'Reilly M."/>
            <person name="Ogawa K."/>
            <person name="Ogiwara A."/>
            <person name="Oudega B."/>
            <person name="Park S.-H."/>
            <person name="Parro V."/>
            <person name="Pohl T.M."/>
            <person name="Portetelle D."/>
            <person name="Porwollik S."/>
            <person name="Prescott A.M."/>
            <person name="Presecan E."/>
            <person name="Pujic P."/>
            <person name="Purnelle B."/>
            <person name="Rapoport G."/>
            <person name="Rey M."/>
            <person name="Reynolds S."/>
            <person name="Rieger M."/>
            <person name="Rivolta C."/>
            <person name="Rocha E."/>
            <person name="Roche B."/>
            <person name="Rose M."/>
            <person name="Sadaie Y."/>
            <person name="Sato T."/>
            <person name="Scanlan E."/>
            <person name="Schleich S."/>
            <person name="Schroeter R."/>
            <person name="Scoffone F."/>
            <person name="Sekiguchi J."/>
            <person name="Sekowska A."/>
            <person name="Seror S.J."/>
            <person name="Serror P."/>
            <person name="Shin B.-S."/>
            <person name="Soldo B."/>
            <person name="Sorokin A."/>
            <person name="Tacconi E."/>
            <person name="Takagi T."/>
            <person name="Takahashi H."/>
            <person name="Takemaru K."/>
            <person name="Takeuchi M."/>
            <person name="Tamakoshi A."/>
            <person name="Tanaka T."/>
            <person name="Terpstra P."/>
            <person name="Tognoni A."/>
            <person name="Tosato V."/>
            <person name="Uchiyama S."/>
            <person name="Vandenbol M."/>
            <person name="Vannier F."/>
            <person name="Vassarotti A."/>
            <person name="Viari A."/>
            <person name="Wambutt R."/>
            <person name="Wedler E."/>
            <person name="Wedler H."/>
            <person name="Weitzenegger T."/>
            <person name="Winters P."/>
            <person name="Wipat A."/>
            <person name="Yamamoto H."/>
            <person name="Yamane K."/>
            <person name="Yasumoto K."/>
            <person name="Yata K."/>
            <person name="Yoshida K."/>
            <person name="Yoshikawa H.-F."/>
            <person name="Zumstein E."/>
            <person name="Yoshikawa H."/>
            <person name="Danchin A."/>
        </authorList>
    </citation>
    <scope>NUCLEOTIDE SEQUENCE [LARGE SCALE GENOMIC DNA]</scope>
    <source>
        <strain>168</strain>
    </source>
</reference>
<protein>
    <recommendedName>
        <fullName>Uncharacterized protein YrhC</fullName>
    </recommendedName>
</protein>
<comment type="subcellular location">
    <subcellularLocation>
        <location evidence="2">Cell membrane</location>
        <topology evidence="2">Multi-pass membrane protein</topology>
    </subcellularLocation>
</comment>
<sequence length="76" mass="8632">MNKNRMKSLKEDYKHFAFTLLAVSTFLYIGAVLPDQGLTLGQKSTMFLADCVFLAGAFFCADRSLIYKKRLEEADE</sequence>
<gene>
    <name type="primary">yrhC</name>
    <name type="ordered locus">BSU27240</name>
</gene>
<organism>
    <name type="scientific">Bacillus subtilis (strain 168)</name>
    <dbReference type="NCBI Taxonomy" id="224308"/>
    <lineage>
        <taxon>Bacteria</taxon>
        <taxon>Bacillati</taxon>
        <taxon>Bacillota</taxon>
        <taxon>Bacilli</taxon>
        <taxon>Bacillales</taxon>
        <taxon>Bacillaceae</taxon>
        <taxon>Bacillus</taxon>
    </lineage>
</organism>
<name>YRHC_BACSU</name>